<dbReference type="EMBL" id="CP001252">
    <property type="protein sequence ID" value="ACK44936.1"/>
    <property type="molecule type" value="Genomic_DNA"/>
</dbReference>
<dbReference type="SMR" id="B8E4J5"/>
<dbReference type="KEGG" id="sbp:Sbal223_0402"/>
<dbReference type="HOGENOM" id="CLU_073529_0_1_6"/>
<dbReference type="Proteomes" id="UP000002507">
    <property type="component" value="Chromosome"/>
</dbReference>
<dbReference type="GO" id="GO:0046872">
    <property type="term" value="F:metal ion binding"/>
    <property type="evidence" value="ECO:0007669"/>
    <property type="project" value="UniProtKB-KW"/>
</dbReference>
<dbReference type="GO" id="GO:0008237">
    <property type="term" value="F:metallopeptidase activity"/>
    <property type="evidence" value="ECO:0007669"/>
    <property type="project" value="UniProtKB-KW"/>
</dbReference>
<dbReference type="GO" id="GO:0006508">
    <property type="term" value="P:proteolysis"/>
    <property type="evidence" value="ECO:0007669"/>
    <property type="project" value="UniProtKB-KW"/>
</dbReference>
<dbReference type="CDD" id="cd08071">
    <property type="entry name" value="MPN_DUF2466"/>
    <property type="match status" value="1"/>
</dbReference>
<dbReference type="FunFam" id="3.40.140.10:FF:000032">
    <property type="entry name" value="DNA repair protein RadC"/>
    <property type="match status" value="1"/>
</dbReference>
<dbReference type="Gene3D" id="3.40.140.10">
    <property type="entry name" value="Cytidine Deaminase, domain 2"/>
    <property type="match status" value="1"/>
</dbReference>
<dbReference type="InterPro" id="IPR037518">
    <property type="entry name" value="MPN"/>
</dbReference>
<dbReference type="InterPro" id="IPR025657">
    <property type="entry name" value="RadC_JAB"/>
</dbReference>
<dbReference type="InterPro" id="IPR010994">
    <property type="entry name" value="RuvA_2-like"/>
</dbReference>
<dbReference type="InterPro" id="IPR001405">
    <property type="entry name" value="UPF0758"/>
</dbReference>
<dbReference type="InterPro" id="IPR020891">
    <property type="entry name" value="UPF0758_CS"/>
</dbReference>
<dbReference type="InterPro" id="IPR046778">
    <property type="entry name" value="UPF0758_N"/>
</dbReference>
<dbReference type="NCBIfam" id="NF000642">
    <property type="entry name" value="PRK00024.1"/>
    <property type="match status" value="1"/>
</dbReference>
<dbReference type="NCBIfam" id="TIGR00608">
    <property type="entry name" value="radc"/>
    <property type="match status" value="1"/>
</dbReference>
<dbReference type="PANTHER" id="PTHR30471">
    <property type="entry name" value="DNA REPAIR PROTEIN RADC"/>
    <property type="match status" value="1"/>
</dbReference>
<dbReference type="PANTHER" id="PTHR30471:SF3">
    <property type="entry name" value="UPF0758 PROTEIN YEES-RELATED"/>
    <property type="match status" value="1"/>
</dbReference>
<dbReference type="Pfam" id="PF04002">
    <property type="entry name" value="RadC"/>
    <property type="match status" value="1"/>
</dbReference>
<dbReference type="Pfam" id="PF20582">
    <property type="entry name" value="UPF0758_N"/>
    <property type="match status" value="1"/>
</dbReference>
<dbReference type="SUPFAM" id="SSF102712">
    <property type="entry name" value="JAB1/MPN domain"/>
    <property type="match status" value="1"/>
</dbReference>
<dbReference type="SUPFAM" id="SSF47781">
    <property type="entry name" value="RuvA domain 2-like"/>
    <property type="match status" value="1"/>
</dbReference>
<dbReference type="PROSITE" id="PS50249">
    <property type="entry name" value="MPN"/>
    <property type="match status" value="1"/>
</dbReference>
<dbReference type="PROSITE" id="PS01302">
    <property type="entry name" value="UPF0758"/>
    <property type="match status" value="1"/>
</dbReference>
<proteinExistence type="inferred from homology"/>
<gene>
    <name type="ordered locus">Sbal223_0402</name>
</gene>
<sequence>MGIKDWPEGEGPRDKLLQKGAGQLSDAELLAVLLRNGLAGLNAVDLARSLISEFGGLRNLLCAPRNQVCRLPGVGPVKYAQLQAAAELARRVAQENLQRGQVLTNPDLTRDYLMRQLADRSYEVFAVLLLDSQHRVIQFVELFRGTIDSASVYPREVVSLVLEKKAAAVIVCHNHPSGIAEPSQADRRITERLKNALATIDVSLLDHMVVGDREIVSFAERGWIN</sequence>
<keyword id="KW-0378">Hydrolase</keyword>
<keyword id="KW-0479">Metal-binding</keyword>
<keyword id="KW-0482">Metalloprotease</keyword>
<keyword id="KW-0645">Protease</keyword>
<keyword id="KW-0862">Zinc</keyword>
<protein>
    <recommendedName>
        <fullName>UPF0758 protein Sbal223_0402</fullName>
    </recommendedName>
</protein>
<reference key="1">
    <citation type="submission" date="2008-12" db="EMBL/GenBank/DDBJ databases">
        <title>Complete sequence of chromosome of Shewanella baltica OS223.</title>
        <authorList>
            <consortium name="US DOE Joint Genome Institute"/>
            <person name="Lucas S."/>
            <person name="Copeland A."/>
            <person name="Lapidus A."/>
            <person name="Glavina del Rio T."/>
            <person name="Dalin E."/>
            <person name="Tice H."/>
            <person name="Bruce D."/>
            <person name="Goodwin L."/>
            <person name="Pitluck S."/>
            <person name="Chertkov O."/>
            <person name="Meincke L."/>
            <person name="Brettin T."/>
            <person name="Detter J.C."/>
            <person name="Han C."/>
            <person name="Kuske C.R."/>
            <person name="Larimer F."/>
            <person name="Land M."/>
            <person name="Hauser L."/>
            <person name="Kyrpides N."/>
            <person name="Ovchinnikova G."/>
            <person name="Brettar I."/>
            <person name="Rodrigues J."/>
            <person name="Konstantinidis K."/>
            <person name="Tiedje J."/>
        </authorList>
    </citation>
    <scope>NUCLEOTIDE SEQUENCE [LARGE SCALE GENOMIC DNA]</scope>
    <source>
        <strain>OS223</strain>
    </source>
</reference>
<accession>B8E4J5</accession>
<feature type="chain" id="PRO_1000195304" description="UPF0758 protein Sbal223_0402">
    <location>
        <begin position="1"/>
        <end position="225"/>
    </location>
</feature>
<feature type="domain" description="MPN" evidence="1">
    <location>
        <begin position="102"/>
        <end position="224"/>
    </location>
</feature>
<feature type="short sequence motif" description="JAMM motif" evidence="1">
    <location>
        <begin position="173"/>
        <end position="186"/>
    </location>
</feature>
<feature type="binding site" evidence="1">
    <location>
        <position position="173"/>
    </location>
    <ligand>
        <name>Zn(2+)</name>
        <dbReference type="ChEBI" id="CHEBI:29105"/>
        <note>catalytic</note>
    </ligand>
</feature>
<feature type="binding site" evidence="1">
    <location>
        <position position="175"/>
    </location>
    <ligand>
        <name>Zn(2+)</name>
        <dbReference type="ChEBI" id="CHEBI:29105"/>
        <note>catalytic</note>
    </ligand>
</feature>
<feature type="binding site" evidence="1">
    <location>
        <position position="186"/>
    </location>
    <ligand>
        <name>Zn(2+)</name>
        <dbReference type="ChEBI" id="CHEBI:29105"/>
        <note>catalytic</note>
    </ligand>
</feature>
<evidence type="ECO:0000255" key="1">
    <source>
        <dbReference type="PROSITE-ProRule" id="PRU01182"/>
    </source>
</evidence>
<evidence type="ECO:0000305" key="2"/>
<comment type="similarity">
    <text evidence="2">Belongs to the UPF0758 family.</text>
</comment>
<organism>
    <name type="scientific">Shewanella baltica (strain OS223)</name>
    <dbReference type="NCBI Taxonomy" id="407976"/>
    <lineage>
        <taxon>Bacteria</taxon>
        <taxon>Pseudomonadati</taxon>
        <taxon>Pseudomonadota</taxon>
        <taxon>Gammaproteobacteria</taxon>
        <taxon>Alteromonadales</taxon>
        <taxon>Shewanellaceae</taxon>
        <taxon>Shewanella</taxon>
    </lineage>
</organism>
<name>Y402_SHEB2</name>